<sequence length="457" mass="50458">MALWGGRFSQAADQRFKQFNDSLRFDYRLAEQDIVGSIGWSKALVTVNVLSEQEQQQLEQALNALLVDVQADPEMILQSDAEDIHSWVEQRLIEKVGDLGKKLHTGRSRNDQVATDLKLWCKTQIAELLLSVRQLRQALVTTAEANQDAVMPGYTHLQRAQPVTFAHWCLAYHEMLARDESRLEDTLKRLDVSPLGCGALAGTAYPIDREQLAGWLGFASATRNSLDTVSDRDHVLELLSDASIGMIHLSRFAEDLIFFNSGEAAFVELSDRVTSGSSLMPQKKNPDALELIRGKCGRVQGALTGMMMTLKGLPLAYNKDMQEDKEGLFDALDTWHDCLMMAGLVLEGIQVKRPRCKEAAEQGYANSTELADYLVAKGVPFREAHHIVGEAVVEAIRQGKALEALPLADLQKFSAVIAEDVYPILALQSCLDKRAAQGGVSPQQVAKAISDAKQRLA</sequence>
<reference key="1">
    <citation type="submission" date="2009-07" db="EMBL/GenBank/DDBJ databases">
        <title>Complete sequence of Pectobacterium carotovorum subsp. carotovorum PC1.</title>
        <authorList>
            <consortium name="US DOE Joint Genome Institute"/>
            <person name="Lucas S."/>
            <person name="Copeland A."/>
            <person name="Lapidus A."/>
            <person name="Glavina del Rio T."/>
            <person name="Tice H."/>
            <person name="Bruce D."/>
            <person name="Goodwin L."/>
            <person name="Pitluck S."/>
            <person name="Munk A.C."/>
            <person name="Brettin T."/>
            <person name="Detter J.C."/>
            <person name="Han C."/>
            <person name="Tapia R."/>
            <person name="Larimer F."/>
            <person name="Land M."/>
            <person name="Hauser L."/>
            <person name="Kyrpides N."/>
            <person name="Mikhailova N."/>
            <person name="Balakrishnan V."/>
            <person name="Glasner J."/>
            <person name="Perna N.T."/>
        </authorList>
    </citation>
    <scope>NUCLEOTIDE SEQUENCE [LARGE SCALE GENOMIC DNA]</scope>
    <source>
        <strain>PC1</strain>
    </source>
</reference>
<accession>C6DI79</accession>
<comment type="catalytic activity">
    <reaction evidence="1">
        <text>2-(N(omega)-L-arginino)succinate = fumarate + L-arginine</text>
        <dbReference type="Rhea" id="RHEA:24020"/>
        <dbReference type="ChEBI" id="CHEBI:29806"/>
        <dbReference type="ChEBI" id="CHEBI:32682"/>
        <dbReference type="ChEBI" id="CHEBI:57472"/>
        <dbReference type="EC" id="4.3.2.1"/>
    </reaction>
</comment>
<comment type="pathway">
    <text evidence="1">Amino-acid biosynthesis; L-arginine biosynthesis; L-arginine from L-ornithine and carbamoyl phosphate: step 3/3.</text>
</comment>
<comment type="subcellular location">
    <subcellularLocation>
        <location evidence="1">Cytoplasm</location>
    </subcellularLocation>
</comment>
<comment type="similarity">
    <text evidence="1">Belongs to the lyase 1 family. Argininosuccinate lyase subfamily.</text>
</comment>
<keyword id="KW-0028">Amino-acid biosynthesis</keyword>
<keyword id="KW-0055">Arginine biosynthesis</keyword>
<keyword id="KW-0963">Cytoplasm</keyword>
<keyword id="KW-0456">Lyase</keyword>
<feature type="chain" id="PRO_1000201704" description="Argininosuccinate lyase">
    <location>
        <begin position="1"/>
        <end position="457"/>
    </location>
</feature>
<protein>
    <recommendedName>
        <fullName evidence="1">Argininosuccinate lyase</fullName>
        <shortName evidence="1">ASAL</shortName>
        <ecNumber evidence="1">4.3.2.1</ecNumber>
    </recommendedName>
    <alternativeName>
        <fullName evidence="1">Arginosuccinase</fullName>
    </alternativeName>
</protein>
<proteinExistence type="inferred from homology"/>
<evidence type="ECO:0000255" key="1">
    <source>
        <dbReference type="HAMAP-Rule" id="MF_00006"/>
    </source>
</evidence>
<dbReference type="EC" id="4.3.2.1" evidence="1"/>
<dbReference type="EMBL" id="CP001657">
    <property type="protein sequence ID" value="ACT15073.1"/>
    <property type="molecule type" value="Genomic_DNA"/>
</dbReference>
<dbReference type="RefSeq" id="WP_015842150.1">
    <property type="nucleotide sequence ID" value="NC_012917.1"/>
</dbReference>
<dbReference type="SMR" id="C6DI79"/>
<dbReference type="STRING" id="561230.PC1_4058"/>
<dbReference type="KEGG" id="pct:PC1_4058"/>
<dbReference type="eggNOG" id="COG0165">
    <property type="taxonomic scope" value="Bacteria"/>
</dbReference>
<dbReference type="HOGENOM" id="CLU_027272_2_3_6"/>
<dbReference type="OrthoDB" id="9769623at2"/>
<dbReference type="UniPathway" id="UPA00068">
    <property type="reaction ID" value="UER00114"/>
</dbReference>
<dbReference type="Proteomes" id="UP000002736">
    <property type="component" value="Chromosome"/>
</dbReference>
<dbReference type="GO" id="GO:0005829">
    <property type="term" value="C:cytosol"/>
    <property type="evidence" value="ECO:0007669"/>
    <property type="project" value="TreeGrafter"/>
</dbReference>
<dbReference type="GO" id="GO:0004056">
    <property type="term" value="F:argininosuccinate lyase activity"/>
    <property type="evidence" value="ECO:0007669"/>
    <property type="project" value="UniProtKB-UniRule"/>
</dbReference>
<dbReference type="GO" id="GO:0042450">
    <property type="term" value="P:arginine biosynthetic process via ornithine"/>
    <property type="evidence" value="ECO:0007669"/>
    <property type="project" value="InterPro"/>
</dbReference>
<dbReference type="GO" id="GO:0006526">
    <property type="term" value="P:L-arginine biosynthetic process"/>
    <property type="evidence" value="ECO:0007669"/>
    <property type="project" value="UniProtKB-UniRule"/>
</dbReference>
<dbReference type="CDD" id="cd01359">
    <property type="entry name" value="Argininosuccinate_lyase"/>
    <property type="match status" value="1"/>
</dbReference>
<dbReference type="FunFam" id="1.10.40.30:FF:000001">
    <property type="entry name" value="Argininosuccinate lyase"/>
    <property type="match status" value="1"/>
</dbReference>
<dbReference type="FunFam" id="1.20.200.10:FF:000006">
    <property type="entry name" value="Argininosuccinate lyase"/>
    <property type="match status" value="1"/>
</dbReference>
<dbReference type="Gene3D" id="1.10.40.30">
    <property type="entry name" value="Fumarase/aspartase (C-terminal domain)"/>
    <property type="match status" value="1"/>
</dbReference>
<dbReference type="Gene3D" id="1.20.200.10">
    <property type="entry name" value="Fumarase/aspartase (Central domain)"/>
    <property type="match status" value="1"/>
</dbReference>
<dbReference type="Gene3D" id="1.10.275.10">
    <property type="entry name" value="Fumarase/aspartase (N-terminal domain)"/>
    <property type="match status" value="1"/>
</dbReference>
<dbReference type="HAMAP" id="MF_00006">
    <property type="entry name" value="Arg_succ_lyase"/>
    <property type="match status" value="1"/>
</dbReference>
<dbReference type="InterPro" id="IPR029419">
    <property type="entry name" value="Arg_succ_lyase_C"/>
</dbReference>
<dbReference type="InterPro" id="IPR009049">
    <property type="entry name" value="Argininosuccinate_lyase"/>
</dbReference>
<dbReference type="InterPro" id="IPR024083">
    <property type="entry name" value="Fumarase/histidase_N"/>
</dbReference>
<dbReference type="InterPro" id="IPR020557">
    <property type="entry name" value="Fumarate_lyase_CS"/>
</dbReference>
<dbReference type="InterPro" id="IPR000362">
    <property type="entry name" value="Fumarate_lyase_fam"/>
</dbReference>
<dbReference type="InterPro" id="IPR022761">
    <property type="entry name" value="Fumarate_lyase_N"/>
</dbReference>
<dbReference type="InterPro" id="IPR008948">
    <property type="entry name" value="L-Aspartase-like"/>
</dbReference>
<dbReference type="NCBIfam" id="TIGR00838">
    <property type="entry name" value="argH"/>
    <property type="match status" value="1"/>
</dbReference>
<dbReference type="NCBIfam" id="NF008964">
    <property type="entry name" value="PRK12308.1"/>
    <property type="match status" value="1"/>
</dbReference>
<dbReference type="PANTHER" id="PTHR43814">
    <property type="entry name" value="ARGININOSUCCINATE LYASE"/>
    <property type="match status" value="1"/>
</dbReference>
<dbReference type="PANTHER" id="PTHR43814:SF1">
    <property type="entry name" value="ARGININOSUCCINATE LYASE"/>
    <property type="match status" value="1"/>
</dbReference>
<dbReference type="Pfam" id="PF14698">
    <property type="entry name" value="ASL_C2"/>
    <property type="match status" value="1"/>
</dbReference>
<dbReference type="Pfam" id="PF00206">
    <property type="entry name" value="Lyase_1"/>
    <property type="match status" value="1"/>
</dbReference>
<dbReference type="PRINTS" id="PR00145">
    <property type="entry name" value="ARGSUCLYASE"/>
</dbReference>
<dbReference type="PRINTS" id="PR00149">
    <property type="entry name" value="FUMRATELYASE"/>
</dbReference>
<dbReference type="SUPFAM" id="SSF48557">
    <property type="entry name" value="L-aspartase-like"/>
    <property type="match status" value="1"/>
</dbReference>
<dbReference type="PROSITE" id="PS00163">
    <property type="entry name" value="FUMARATE_LYASES"/>
    <property type="match status" value="1"/>
</dbReference>
<name>ARLY_PECCP</name>
<gene>
    <name evidence="1" type="primary">argH</name>
    <name type="ordered locus">PC1_4058</name>
</gene>
<organism>
    <name type="scientific">Pectobacterium carotovorum subsp. carotovorum (strain PC1)</name>
    <dbReference type="NCBI Taxonomy" id="561230"/>
    <lineage>
        <taxon>Bacteria</taxon>
        <taxon>Pseudomonadati</taxon>
        <taxon>Pseudomonadota</taxon>
        <taxon>Gammaproteobacteria</taxon>
        <taxon>Enterobacterales</taxon>
        <taxon>Pectobacteriaceae</taxon>
        <taxon>Pectobacterium</taxon>
    </lineage>
</organism>